<accession>Q88FY6</accession>
<gene>
    <name type="primary">nicT</name>
    <name type="ordered locus">PP_3940</name>
</gene>
<evidence type="ECO:0000255" key="1"/>
<evidence type="ECO:0000269" key="2">
    <source>
    </source>
</evidence>
<evidence type="ECO:0000305" key="3"/>
<evidence type="ECO:0000305" key="4">
    <source>
    </source>
</evidence>
<comment type="function">
    <text evidence="4">Probable transporter, possibly involved in the aerobic nicotinate degradation pathway.</text>
</comment>
<comment type="subcellular location">
    <subcellularLocation>
        <location evidence="3">Membrane</location>
        <topology evidence="3">Multi-pass membrane protein</topology>
    </subcellularLocation>
</comment>
<comment type="induction">
    <text evidence="2">Repressed by NicR in the absence of 6-hydroxynicotinate (6HNA) inducer. In presence of 6HNA, repression is alleviated.</text>
</comment>
<comment type="similarity">
    <text evidence="3">Belongs to the major facilitator superfamily.</text>
</comment>
<reference key="1">
    <citation type="journal article" date="2002" name="Environ. Microbiol.">
        <title>Complete genome sequence and comparative analysis of the metabolically versatile Pseudomonas putida KT2440.</title>
        <authorList>
            <person name="Nelson K.E."/>
            <person name="Weinel C."/>
            <person name="Paulsen I.T."/>
            <person name="Dodson R.J."/>
            <person name="Hilbert H."/>
            <person name="Martins dos Santos V.A.P."/>
            <person name="Fouts D.E."/>
            <person name="Gill S.R."/>
            <person name="Pop M."/>
            <person name="Holmes M."/>
            <person name="Brinkac L.M."/>
            <person name="Beanan M.J."/>
            <person name="DeBoy R.T."/>
            <person name="Daugherty S.C."/>
            <person name="Kolonay J.F."/>
            <person name="Madupu R."/>
            <person name="Nelson W.C."/>
            <person name="White O."/>
            <person name="Peterson J.D."/>
            <person name="Khouri H.M."/>
            <person name="Hance I."/>
            <person name="Chris Lee P."/>
            <person name="Holtzapple E.K."/>
            <person name="Scanlan D."/>
            <person name="Tran K."/>
            <person name="Moazzez A."/>
            <person name="Utterback T.R."/>
            <person name="Rizzo M."/>
            <person name="Lee K."/>
            <person name="Kosack D."/>
            <person name="Moestl D."/>
            <person name="Wedler H."/>
            <person name="Lauber J."/>
            <person name="Stjepandic D."/>
            <person name="Hoheisel J."/>
            <person name="Straetz M."/>
            <person name="Heim S."/>
            <person name="Kiewitz C."/>
            <person name="Eisen J.A."/>
            <person name="Timmis K.N."/>
            <person name="Duesterhoeft A."/>
            <person name="Tuemmler B."/>
            <person name="Fraser C.M."/>
        </authorList>
    </citation>
    <scope>NUCLEOTIDE SEQUENCE [LARGE SCALE GENOMIC DNA]</scope>
    <source>
        <strain>ATCC 47054 / DSM 6125 / CFBP 8728 / NCIMB 11950 / KT2440</strain>
    </source>
</reference>
<reference key="2">
    <citation type="journal article" date="2008" name="Proc. Natl. Acad. Sci. U.S.A.">
        <title>Deciphering the genetic determinants for aerobic nicotinic acid degradation: the nic cluster from Pseudomonas putida KT2440.</title>
        <authorList>
            <person name="Jimenez J.I."/>
            <person name="Canales A."/>
            <person name="Jimenez-Barbero J."/>
            <person name="Ginalski K."/>
            <person name="Rychlewski L."/>
            <person name="Garcia J.L."/>
            <person name="Diaz E."/>
        </authorList>
    </citation>
    <scope>FUNCTION</scope>
    <source>
        <strain>ATCC 47054 / DSM 6125 / CFBP 8728 / NCIMB 11950 / KT2440</strain>
    </source>
</reference>
<reference key="3">
    <citation type="journal article" date="2011" name="Environ. Microbiol.">
        <title>A finely tuned regulatory circuit of the nicotinic acid degradation pathway in Pseudomonas putida.</title>
        <authorList>
            <person name="Jimenez J.I."/>
            <person name="Juarez J.F."/>
            <person name="Garcia J.L."/>
            <person name="Diaz E."/>
        </authorList>
    </citation>
    <scope>INDUCTION</scope>
    <source>
        <strain>ATCC 47054 / DSM 6125 / CFBP 8728 / NCIMB 11950 / KT2440</strain>
    </source>
</reference>
<proteinExistence type="evidence at transcript level"/>
<sequence length="437" mass="47592">MPIANATTVHSDIDHGTKALYSKITWRLIPFLCFCYLAAYLDRINVGFAKLQMLEDLQFSTAAYGLGAGLFFVGYIIFEVPSNLILQRVGAKLWIARIMITWGLLSACTMFVTSTTQFYILRFLLGAAEAGFLPGVLYYLTMWYPTYRRGRIIALFMIGLPLSSVIGGPISGWIMGHFDQVQGLHGWQWLFLLEAIPSVLLGILTFWALPNHFQQAKWLSADDKAQLAADLAADDAEGKDSKHSFRDGFFNLKVWMLGGIDFSILLSAYAMGFWMPTFIRDAGVSDTFHIGLLTAIPSLAALAGMLMIGASSDRHRERRWHIIVPFIIGAIAMASSTLFSQNLVMTVVLFAIASAAIIGAVPVFFSLPATFLKGTAAATGFALACSVANIAGLVSNSLMGVVTDLTGTSHAALWVFAGCLILSCFLVIALPAKLVNR</sequence>
<name>NICT_PSEPK</name>
<protein>
    <recommendedName>
        <fullName>Putative metabolite transport protein NicT</fullName>
    </recommendedName>
    <alternativeName>
        <fullName>Nicotinate degradation protein T</fullName>
    </alternativeName>
</protein>
<feature type="chain" id="PRO_0000418474" description="Putative metabolite transport protein NicT">
    <location>
        <begin position="1"/>
        <end position="437"/>
    </location>
</feature>
<feature type="transmembrane region" description="Helical" evidence="1">
    <location>
        <begin position="28"/>
        <end position="48"/>
    </location>
</feature>
<feature type="transmembrane region" description="Helical" evidence="1">
    <location>
        <begin position="66"/>
        <end position="86"/>
    </location>
</feature>
<feature type="transmembrane region" description="Helical" evidence="1">
    <location>
        <begin position="93"/>
        <end position="113"/>
    </location>
</feature>
<feature type="transmembrane region" description="Helical" evidence="1">
    <location>
        <begin position="123"/>
        <end position="143"/>
    </location>
</feature>
<feature type="transmembrane region" description="Helical" evidence="1">
    <location>
        <begin position="152"/>
        <end position="172"/>
    </location>
</feature>
<feature type="transmembrane region" description="Helical" evidence="1">
    <location>
        <begin position="189"/>
        <end position="209"/>
    </location>
</feature>
<feature type="transmembrane region" description="Helical" evidence="1">
    <location>
        <begin position="254"/>
        <end position="274"/>
    </location>
</feature>
<feature type="transmembrane region" description="Helical" evidence="1">
    <location>
        <begin position="290"/>
        <end position="310"/>
    </location>
</feature>
<feature type="transmembrane region" description="Helical" evidence="1">
    <location>
        <begin position="320"/>
        <end position="340"/>
    </location>
</feature>
<feature type="transmembrane region" description="Helical" evidence="1">
    <location>
        <begin position="347"/>
        <end position="367"/>
    </location>
</feature>
<feature type="transmembrane region" description="Helical" evidence="1">
    <location>
        <begin position="374"/>
        <end position="394"/>
    </location>
</feature>
<feature type="transmembrane region" description="Helical" evidence="1">
    <location>
        <begin position="411"/>
        <end position="431"/>
    </location>
</feature>
<dbReference type="EMBL" id="AE015451">
    <property type="protein sequence ID" value="AAN69534.1"/>
    <property type="molecule type" value="Genomic_DNA"/>
</dbReference>
<dbReference type="RefSeq" id="NP_746070.1">
    <property type="nucleotide sequence ID" value="NC_002947.4"/>
</dbReference>
<dbReference type="RefSeq" id="WP_003251108.1">
    <property type="nucleotide sequence ID" value="NZ_CP169744.1"/>
</dbReference>
<dbReference type="SMR" id="Q88FY6"/>
<dbReference type="STRING" id="160488.PP_3940"/>
<dbReference type="PaxDb" id="160488-PP_3940"/>
<dbReference type="KEGG" id="ppu:PP_3940"/>
<dbReference type="PATRIC" id="fig|160488.4.peg.4194"/>
<dbReference type="eggNOG" id="COG2271">
    <property type="taxonomic scope" value="Bacteria"/>
</dbReference>
<dbReference type="HOGENOM" id="CLU_001265_0_0_6"/>
<dbReference type="OrthoDB" id="9773957at2"/>
<dbReference type="PhylomeDB" id="Q88FY6"/>
<dbReference type="BioCyc" id="PPUT160488:G1G01-4205-MONOMER"/>
<dbReference type="Proteomes" id="UP000000556">
    <property type="component" value="Chromosome"/>
</dbReference>
<dbReference type="GO" id="GO:0005886">
    <property type="term" value="C:plasma membrane"/>
    <property type="evidence" value="ECO:0007669"/>
    <property type="project" value="TreeGrafter"/>
</dbReference>
<dbReference type="GO" id="GO:0022857">
    <property type="term" value="F:transmembrane transporter activity"/>
    <property type="evidence" value="ECO:0007669"/>
    <property type="project" value="InterPro"/>
</dbReference>
<dbReference type="GO" id="GO:0009056">
    <property type="term" value="P:catabolic process"/>
    <property type="evidence" value="ECO:0007669"/>
    <property type="project" value="UniProtKB-KW"/>
</dbReference>
<dbReference type="CDD" id="cd17319">
    <property type="entry name" value="MFS_ExuT_GudP_like"/>
    <property type="match status" value="1"/>
</dbReference>
<dbReference type="FunFam" id="1.20.1250.20:FF:000018">
    <property type="entry name" value="MFS transporter permease"/>
    <property type="match status" value="1"/>
</dbReference>
<dbReference type="Gene3D" id="1.20.1250.20">
    <property type="entry name" value="MFS general substrate transporter like domains"/>
    <property type="match status" value="2"/>
</dbReference>
<dbReference type="InterPro" id="IPR011701">
    <property type="entry name" value="MFS"/>
</dbReference>
<dbReference type="InterPro" id="IPR020846">
    <property type="entry name" value="MFS_dom"/>
</dbReference>
<dbReference type="InterPro" id="IPR036259">
    <property type="entry name" value="MFS_trans_sf"/>
</dbReference>
<dbReference type="PANTHER" id="PTHR43791">
    <property type="entry name" value="PERMEASE-RELATED"/>
    <property type="match status" value="1"/>
</dbReference>
<dbReference type="PANTHER" id="PTHR43791:SF36">
    <property type="entry name" value="TRANSPORTER, PUTATIVE (AFU_ORTHOLOGUE AFUA_6G08340)-RELATED"/>
    <property type="match status" value="1"/>
</dbReference>
<dbReference type="Pfam" id="PF07690">
    <property type="entry name" value="MFS_1"/>
    <property type="match status" value="1"/>
</dbReference>
<dbReference type="SUPFAM" id="SSF103473">
    <property type="entry name" value="MFS general substrate transporter"/>
    <property type="match status" value="1"/>
</dbReference>
<dbReference type="PROSITE" id="PS50850">
    <property type="entry name" value="MFS"/>
    <property type="match status" value="1"/>
</dbReference>
<keyword id="KW-0058">Aromatic hydrocarbons catabolism</keyword>
<keyword id="KW-0472">Membrane</keyword>
<keyword id="KW-1185">Reference proteome</keyword>
<keyword id="KW-0812">Transmembrane</keyword>
<keyword id="KW-1133">Transmembrane helix</keyword>
<keyword id="KW-0813">Transport</keyword>
<organism>
    <name type="scientific">Pseudomonas putida (strain ATCC 47054 / DSM 6125 / CFBP 8728 / NCIMB 11950 / KT2440)</name>
    <dbReference type="NCBI Taxonomy" id="160488"/>
    <lineage>
        <taxon>Bacteria</taxon>
        <taxon>Pseudomonadati</taxon>
        <taxon>Pseudomonadota</taxon>
        <taxon>Gammaproteobacteria</taxon>
        <taxon>Pseudomonadales</taxon>
        <taxon>Pseudomonadaceae</taxon>
        <taxon>Pseudomonas</taxon>
    </lineage>
</organism>